<organism>
    <name type="scientific">Synechococcus sp. (strain WH7803)</name>
    <dbReference type="NCBI Taxonomy" id="32051"/>
    <lineage>
        <taxon>Bacteria</taxon>
        <taxon>Bacillati</taxon>
        <taxon>Cyanobacteriota</taxon>
        <taxon>Cyanophyceae</taxon>
        <taxon>Synechococcales</taxon>
        <taxon>Synechococcaceae</taxon>
        <taxon>Synechococcus</taxon>
    </lineage>
</organism>
<dbReference type="EC" id="2.7.7.8" evidence="1"/>
<dbReference type="EMBL" id="CT971583">
    <property type="protein sequence ID" value="CAK24334.1"/>
    <property type="molecule type" value="Genomic_DNA"/>
</dbReference>
<dbReference type="SMR" id="A5GN19"/>
<dbReference type="STRING" id="32051.SynWH7803_1908"/>
<dbReference type="KEGG" id="syx:SynWH7803_1908"/>
<dbReference type="eggNOG" id="COG1185">
    <property type="taxonomic scope" value="Bacteria"/>
</dbReference>
<dbReference type="HOGENOM" id="CLU_004217_2_2_3"/>
<dbReference type="OrthoDB" id="9804305at2"/>
<dbReference type="Proteomes" id="UP000001566">
    <property type="component" value="Chromosome"/>
</dbReference>
<dbReference type="GO" id="GO:0005829">
    <property type="term" value="C:cytosol"/>
    <property type="evidence" value="ECO:0007669"/>
    <property type="project" value="TreeGrafter"/>
</dbReference>
<dbReference type="GO" id="GO:0000175">
    <property type="term" value="F:3'-5'-RNA exonuclease activity"/>
    <property type="evidence" value="ECO:0007669"/>
    <property type="project" value="TreeGrafter"/>
</dbReference>
<dbReference type="GO" id="GO:0000287">
    <property type="term" value="F:magnesium ion binding"/>
    <property type="evidence" value="ECO:0007669"/>
    <property type="project" value="UniProtKB-UniRule"/>
</dbReference>
<dbReference type="GO" id="GO:0004654">
    <property type="term" value="F:polyribonucleotide nucleotidyltransferase activity"/>
    <property type="evidence" value="ECO:0007669"/>
    <property type="project" value="UniProtKB-UniRule"/>
</dbReference>
<dbReference type="GO" id="GO:0003723">
    <property type="term" value="F:RNA binding"/>
    <property type="evidence" value="ECO:0007669"/>
    <property type="project" value="UniProtKB-UniRule"/>
</dbReference>
<dbReference type="GO" id="GO:0006402">
    <property type="term" value="P:mRNA catabolic process"/>
    <property type="evidence" value="ECO:0007669"/>
    <property type="project" value="UniProtKB-UniRule"/>
</dbReference>
<dbReference type="GO" id="GO:0006396">
    <property type="term" value="P:RNA processing"/>
    <property type="evidence" value="ECO:0007669"/>
    <property type="project" value="InterPro"/>
</dbReference>
<dbReference type="CDD" id="cd02393">
    <property type="entry name" value="KH-I_PNPase"/>
    <property type="match status" value="1"/>
</dbReference>
<dbReference type="CDD" id="cd11363">
    <property type="entry name" value="RNase_PH_PNPase_1"/>
    <property type="match status" value="1"/>
</dbReference>
<dbReference type="CDD" id="cd11364">
    <property type="entry name" value="RNase_PH_PNPase_2"/>
    <property type="match status" value="1"/>
</dbReference>
<dbReference type="FunFam" id="2.40.50.140:FF:000023">
    <property type="entry name" value="Polyribonucleotide nucleotidyltransferase"/>
    <property type="match status" value="1"/>
</dbReference>
<dbReference type="FunFam" id="3.30.1370.10:FF:000001">
    <property type="entry name" value="Polyribonucleotide nucleotidyltransferase"/>
    <property type="match status" value="1"/>
</dbReference>
<dbReference type="FunFam" id="3.30.230.70:FF:000001">
    <property type="entry name" value="Polyribonucleotide nucleotidyltransferase"/>
    <property type="match status" value="1"/>
</dbReference>
<dbReference type="FunFam" id="3.30.230.70:FF:000002">
    <property type="entry name" value="Polyribonucleotide nucleotidyltransferase"/>
    <property type="match status" value="1"/>
</dbReference>
<dbReference type="Gene3D" id="3.30.230.70">
    <property type="entry name" value="GHMP Kinase, N-terminal domain"/>
    <property type="match status" value="2"/>
</dbReference>
<dbReference type="Gene3D" id="3.30.1370.10">
    <property type="entry name" value="K Homology domain, type 1"/>
    <property type="match status" value="1"/>
</dbReference>
<dbReference type="Gene3D" id="2.40.50.140">
    <property type="entry name" value="Nucleic acid-binding proteins"/>
    <property type="match status" value="1"/>
</dbReference>
<dbReference type="HAMAP" id="MF_01595">
    <property type="entry name" value="PNPase"/>
    <property type="match status" value="1"/>
</dbReference>
<dbReference type="InterPro" id="IPR001247">
    <property type="entry name" value="ExoRNase_PH_dom1"/>
</dbReference>
<dbReference type="InterPro" id="IPR015847">
    <property type="entry name" value="ExoRNase_PH_dom2"/>
</dbReference>
<dbReference type="InterPro" id="IPR036345">
    <property type="entry name" value="ExoRNase_PH_dom2_sf"/>
</dbReference>
<dbReference type="InterPro" id="IPR004087">
    <property type="entry name" value="KH_dom"/>
</dbReference>
<dbReference type="InterPro" id="IPR004088">
    <property type="entry name" value="KH_dom_type_1"/>
</dbReference>
<dbReference type="InterPro" id="IPR036612">
    <property type="entry name" value="KH_dom_type_1_sf"/>
</dbReference>
<dbReference type="InterPro" id="IPR012340">
    <property type="entry name" value="NA-bd_OB-fold"/>
</dbReference>
<dbReference type="InterPro" id="IPR012162">
    <property type="entry name" value="PNPase"/>
</dbReference>
<dbReference type="InterPro" id="IPR027408">
    <property type="entry name" value="PNPase/RNase_PH_dom_sf"/>
</dbReference>
<dbReference type="InterPro" id="IPR015848">
    <property type="entry name" value="PNPase_PH_RNA-bd_bac/org-type"/>
</dbReference>
<dbReference type="InterPro" id="IPR036456">
    <property type="entry name" value="PNPase_PH_RNA-bd_sf"/>
</dbReference>
<dbReference type="InterPro" id="IPR020568">
    <property type="entry name" value="Ribosomal_Su5_D2-typ_SF"/>
</dbReference>
<dbReference type="InterPro" id="IPR003029">
    <property type="entry name" value="S1_domain"/>
</dbReference>
<dbReference type="NCBIfam" id="TIGR03591">
    <property type="entry name" value="polynuc_phos"/>
    <property type="match status" value="1"/>
</dbReference>
<dbReference type="NCBIfam" id="NF008805">
    <property type="entry name" value="PRK11824.1"/>
    <property type="match status" value="1"/>
</dbReference>
<dbReference type="PANTHER" id="PTHR11252">
    <property type="entry name" value="POLYRIBONUCLEOTIDE NUCLEOTIDYLTRANSFERASE"/>
    <property type="match status" value="1"/>
</dbReference>
<dbReference type="PANTHER" id="PTHR11252:SF0">
    <property type="entry name" value="POLYRIBONUCLEOTIDE NUCLEOTIDYLTRANSFERASE 1, MITOCHONDRIAL"/>
    <property type="match status" value="1"/>
</dbReference>
<dbReference type="Pfam" id="PF00013">
    <property type="entry name" value="KH_1"/>
    <property type="match status" value="1"/>
</dbReference>
<dbReference type="Pfam" id="PF03726">
    <property type="entry name" value="PNPase"/>
    <property type="match status" value="1"/>
</dbReference>
<dbReference type="Pfam" id="PF01138">
    <property type="entry name" value="RNase_PH"/>
    <property type="match status" value="2"/>
</dbReference>
<dbReference type="Pfam" id="PF03725">
    <property type="entry name" value="RNase_PH_C"/>
    <property type="match status" value="1"/>
</dbReference>
<dbReference type="Pfam" id="PF00575">
    <property type="entry name" value="S1"/>
    <property type="match status" value="1"/>
</dbReference>
<dbReference type="PIRSF" id="PIRSF005499">
    <property type="entry name" value="PNPase"/>
    <property type="match status" value="1"/>
</dbReference>
<dbReference type="SMART" id="SM00322">
    <property type="entry name" value="KH"/>
    <property type="match status" value="1"/>
</dbReference>
<dbReference type="SMART" id="SM00316">
    <property type="entry name" value="S1"/>
    <property type="match status" value="1"/>
</dbReference>
<dbReference type="SUPFAM" id="SSF54791">
    <property type="entry name" value="Eukaryotic type KH-domain (KH-domain type I)"/>
    <property type="match status" value="1"/>
</dbReference>
<dbReference type="SUPFAM" id="SSF50249">
    <property type="entry name" value="Nucleic acid-binding proteins"/>
    <property type="match status" value="1"/>
</dbReference>
<dbReference type="SUPFAM" id="SSF46915">
    <property type="entry name" value="Polynucleotide phosphorylase/guanosine pentaphosphate synthase (PNPase/GPSI), domain 3"/>
    <property type="match status" value="1"/>
</dbReference>
<dbReference type="SUPFAM" id="SSF55666">
    <property type="entry name" value="Ribonuclease PH domain 2-like"/>
    <property type="match status" value="2"/>
</dbReference>
<dbReference type="SUPFAM" id="SSF54211">
    <property type="entry name" value="Ribosomal protein S5 domain 2-like"/>
    <property type="match status" value="2"/>
</dbReference>
<dbReference type="PROSITE" id="PS50084">
    <property type="entry name" value="KH_TYPE_1"/>
    <property type="match status" value="1"/>
</dbReference>
<dbReference type="PROSITE" id="PS50126">
    <property type="entry name" value="S1"/>
    <property type="match status" value="1"/>
</dbReference>
<comment type="function">
    <text evidence="1">Involved in mRNA degradation. Catalyzes the phosphorolysis of single-stranded polyribonucleotides processively in the 3'- to 5'-direction.</text>
</comment>
<comment type="catalytic activity">
    <reaction evidence="1">
        <text>RNA(n+1) + phosphate = RNA(n) + a ribonucleoside 5'-diphosphate</text>
        <dbReference type="Rhea" id="RHEA:22096"/>
        <dbReference type="Rhea" id="RHEA-COMP:14527"/>
        <dbReference type="Rhea" id="RHEA-COMP:17342"/>
        <dbReference type="ChEBI" id="CHEBI:43474"/>
        <dbReference type="ChEBI" id="CHEBI:57930"/>
        <dbReference type="ChEBI" id="CHEBI:140395"/>
        <dbReference type="EC" id="2.7.7.8"/>
    </reaction>
</comment>
<comment type="cofactor">
    <cofactor evidence="1">
        <name>Mg(2+)</name>
        <dbReference type="ChEBI" id="CHEBI:18420"/>
    </cofactor>
</comment>
<comment type="subcellular location">
    <subcellularLocation>
        <location evidence="1">Cytoplasm</location>
    </subcellularLocation>
</comment>
<comment type="similarity">
    <text evidence="1">Belongs to the polyribonucleotide nucleotidyltransferase family.</text>
</comment>
<gene>
    <name evidence="1" type="primary">pnp</name>
    <name type="ordered locus">SynWH7803_1908</name>
</gene>
<feature type="chain" id="PRO_0000329903" description="Polyribonucleotide nucleotidyltransferase">
    <location>
        <begin position="1"/>
        <end position="721"/>
    </location>
</feature>
<feature type="domain" description="KH" evidence="1">
    <location>
        <begin position="562"/>
        <end position="621"/>
    </location>
</feature>
<feature type="domain" description="S1 motif" evidence="1">
    <location>
        <begin position="631"/>
        <end position="699"/>
    </location>
</feature>
<feature type="region of interest" description="Disordered" evidence="2">
    <location>
        <begin position="700"/>
        <end position="721"/>
    </location>
</feature>
<feature type="compositionally biased region" description="Pro residues" evidence="2">
    <location>
        <begin position="711"/>
        <end position="721"/>
    </location>
</feature>
<feature type="binding site" evidence="1">
    <location>
        <position position="495"/>
    </location>
    <ligand>
        <name>Mg(2+)</name>
        <dbReference type="ChEBI" id="CHEBI:18420"/>
    </ligand>
</feature>
<feature type="binding site" evidence="1">
    <location>
        <position position="501"/>
    </location>
    <ligand>
        <name>Mg(2+)</name>
        <dbReference type="ChEBI" id="CHEBI:18420"/>
    </ligand>
</feature>
<accession>A5GN19</accession>
<sequence>MQGQTQSISFDGREIRLTTGRYAPQAGGSVMIECGDTSVLVTATRSSGREGIDFLPLICDYEERLYAAGRIPGSFMRREGRPPERATLISRLIDRPMRPLFPSWLRDDLQIVATCMSLDERVPADVLSVTGASMATLLAGIPFYGPMAAVRVGLLGDDFVLNPSYREIERGDLDLVVAGTPEGIVMVEAGANQLPEQDVIEAIDFGYEAVCELIKAQESILKDAGIEQVKPEQPEEDSTLPVYLEKACTKAIGEVLSQFDQSKADRDSKLDAIRSSTAETIEALKDSDPVRKLVSANSKALPTSFKALTKKLMRQQIVKDGKRVDGRSLDQVRPISAAAGVLPKRVHGSGLFQRGLTQVLSTATLGTPSDAQEMDDLNPSTEKTYLHHYNFPPYSVGETKPMRSPGRREIGHGALAERAILPVLPAKDTFPYVVRVVSEVLSSNGSTSMGSVCGSTLALMDAGVPLKAPVSGAAMGLIKEGDEVRILTDIQGIEDFLGDMDFKVAGTDKGITALQMDMKITGLAMGTIAEAINQARPARLHILEKMMEAIDTPRDGLSPHAPRLLSFRIDPELIGTVIGPGGRTIKGITERTNTKIDIEDSGIVTIASHDGAAADEAQKIIEGLTRKVNEGEVFSGAITRIIPIGAFVEILPGKEGMIHISQLSEARVEKVEDVVKVGDEVTVRVREIDNRGRINLTLRGVPQNGEEAEPAPAPTPVAPLN</sequence>
<reference key="1">
    <citation type="submission" date="2006-05" db="EMBL/GenBank/DDBJ databases">
        <authorList>
            <consortium name="Genoscope"/>
        </authorList>
    </citation>
    <scope>NUCLEOTIDE SEQUENCE [LARGE SCALE GENOMIC DNA]</scope>
    <source>
        <strain>WH7803</strain>
    </source>
</reference>
<evidence type="ECO:0000255" key="1">
    <source>
        <dbReference type="HAMAP-Rule" id="MF_01595"/>
    </source>
</evidence>
<evidence type="ECO:0000256" key="2">
    <source>
        <dbReference type="SAM" id="MobiDB-lite"/>
    </source>
</evidence>
<keyword id="KW-0963">Cytoplasm</keyword>
<keyword id="KW-0460">Magnesium</keyword>
<keyword id="KW-0479">Metal-binding</keyword>
<keyword id="KW-0548">Nucleotidyltransferase</keyword>
<keyword id="KW-1185">Reference proteome</keyword>
<keyword id="KW-0694">RNA-binding</keyword>
<keyword id="KW-0808">Transferase</keyword>
<name>PNP_SYNPW</name>
<protein>
    <recommendedName>
        <fullName evidence="1">Polyribonucleotide nucleotidyltransferase</fullName>
        <ecNumber evidence="1">2.7.7.8</ecNumber>
    </recommendedName>
    <alternativeName>
        <fullName evidence="1">Polynucleotide phosphorylase</fullName>
        <shortName evidence="1">PNPase</shortName>
    </alternativeName>
</protein>
<proteinExistence type="inferred from homology"/>